<name>RS5_PROMM</name>
<reference key="1">
    <citation type="journal article" date="2003" name="Nature">
        <title>Genome divergence in two Prochlorococcus ecotypes reflects oceanic niche differentiation.</title>
        <authorList>
            <person name="Rocap G."/>
            <person name="Larimer F.W."/>
            <person name="Lamerdin J.E."/>
            <person name="Malfatti S."/>
            <person name="Chain P."/>
            <person name="Ahlgren N.A."/>
            <person name="Arellano A."/>
            <person name="Coleman M."/>
            <person name="Hauser L."/>
            <person name="Hess W.R."/>
            <person name="Johnson Z.I."/>
            <person name="Land M.L."/>
            <person name="Lindell D."/>
            <person name="Post A.F."/>
            <person name="Regala W."/>
            <person name="Shah M."/>
            <person name="Shaw S.L."/>
            <person name="Steglich C."/>
            <person name="Sullivan M.B."/>
            <person name="Ting C.S."/>
            <person name="Tolonen A."/>
            <person name="Webb E.A."/>
            <person name="Zinser E.R."/>
            <person name="Chisholm S.W."/>
        </authorList>
    </citation>
    <scope>NUCLEOTIDE SEQUENCE [LARGE SCALE GENOMIC DNA]</scope>
    <source>
        <strain>MIT 9313</strain>
    </source>
</reference>
<evidence type="ECO:0000255" key="1">
    <source>
        <dbReference type="HAMAP-Rule" id="MF_01307"/>
    </source>
</evidence>
<evidence type="ECO:0000256" key="2">
    <source>
        <dbReference type="SAM" id="MobiDB-lite"/>
    </source>
</evidence>
<evidence type="ECO:0000305" key="3"/>
<organism>
    <name type="scientific">Prochlorococcus marinus (strain MIT 9313)</name>
    <dbReference type="NCBI Taxonomy" id="74547"/>
    <lineage>
        <taxon>Bacteria</taxon>
        <taxon>Bacillati</taxon>
        <taxon>Cyanobacteriota</taxon>
        <taxon>Cyanophyceae</taxon>
        <taxon>Synechococcales</taxon>
        <taxon>Prochlorococcaceae</taxon>
        <taxon>Prochlorococcus</taxon>
    </lineage>
</organism>
<gene>
    <name evidence="1" type="primary">rpsE</name>
    <name evidence="1" type="synonym">rps5</name>
    <name type="ordered locus">PMT_1748</name>
</gene>
<keyword id="KW-1185">Reference proteome</keyword>
<keyword id="KW-0687">Ribonucleoprotein</keyword>
<keyword id="KW-0689">Ribosomal protein</keyword>
<keyword id="KW-0694">RNA-binding</keyword>
<keyword id="KW-0699">rRNA-binding</keyword>
<protein>
    <recommendedName>
        <fullName evidence="1">Small ribosomal subunit protein uS5</fullName>
    </recommendedName>
    <alternativeName>
        <fullName evidence="3">30S ribosomal protein S5</fullName>
    </alternativeName>
</protein>
<feature type="chain" id="PRO_0000131572" description="Small ribosomal subunit protein uS5">
    <location>
        <begin position="1"/>
        <end position="209"/>
    </location>
</feature>
<feature type="domain" description="S5 DRBM" evidence="1">
    <location>
        <begin position="53"/>
        <end position="116"/>
    </location>
</feature>
<feature type="region of interest" description="Disordered" evidence="2">
    <location>
        <begin position="1"/>
        <end position="55"/>
    </location>
</feature>
<feature type="compositionally biased region" description="Polar residues" evidence="2">
    <location>
        <begin position="1"/>
        <end position="11"/>
    </location>
</feature>
<feature type="compositionally biased region" description="Low complexity" evidence="2">
    <location>
        <begin position="18"/>
        <end position="28"/>
    </location>
</feature>
<feature type="compositionally biased region" description="Basic and acidic residues" evidence="2">
    <location>
        <begin position="31"/>
        <end position="55"/>
    </location>
</feature>
<dbReference type="EMBL" id="BX548175">
    <property type="protein sequence ID" value="CAE21923.1"/>
    <property type="molecule type" value="Genomic_DNA"/>
</dbReference>
<dbReference type="RefSeq" id="WP_011131115.1">
    <property type="nucleotide sequence ID" value="NC_005071.1"/>
</dbReference>
<dbReference type="SMR" id="Q7V529"/>
<dbReference type="KEGG" id="pmt:PMT_1748"/>
<dbReference type="eggNOG" id="COG0098">
    <property type="taxonomic scope" value="Bacteria"/>
</dbReference>
<dbReference type="HOGENOM" id="CLU_065898_2_1_3"/>
<dbReference type="OrthoDB" id="9809045at2"/>
<dbReference type="Proteomes" id="UP000001423">
    <property type="component" value="Chromosome"/>
</dbReference>
<dbReference type="GO" id="GO:0015935">
    <property type="term" value="C:small ribosomal subunit"/>
    <property type="evidence" value="ECO:0007669"/>
    <property type="project" value="InterPro"/>
</dbReference>
<dbReference type="GO" id="GO:0019843">
    <property type="term" value="F:rRNA binding"/>
    <property type="evidence" value="ECO:0007669"/>
    <property type="project" value="UniProtKB-UniRule"/>
</dbReference>
<dbReference type="GO" id="GO:0003735">
    <property type="term" value="F:structural constituent of ribosome"/>
    <property type="evidence" value="ECO:0007669"/>
    <property type="project" value="InterPro"/>
</dbReference>
<dbReference type="GO" id="GO:0006412">
    <property type="term" value="P:translation"/>
    <property type="evidence" value="ECO:0007669"/>
    <property type="project" value="UniProtKB-UniRule"/>
</dbReference>
<dbReference type="FunFam" id="3.30.230.10:FF:000002">
    <property type="entry name" value="30S ribosomal protein S5"/>
    <property type="match status" value="1"/>
</dbReference>
<dbReference type="Gene3D" id="3.30.160.20">
    <property type="match status" value="1"/>
</dbReference>
<dbReference type="Gene3D" id="3.30.230.10">
    <property type="match status" value="1"/>
</dbReference>
<dbReference type="HAMAP" id="MF_01307_B">
    <property type="entry name" value="Ribosomal_uS5_B"/>
    <property type="match status" value="1"/>
</dbReference>
<dbReference type="InterPro" id="IPR020568">
    <property type="entry name" value="Ribosomal_Su5_D2-typ_SF"/>
</dbReference>
<dbReference type="InterPro" id="IPR000851">
    <property type="entry name" value="Ribosomal_uS5"/>
</dbReference>
<dbReference type="InterPro" id="IPR005712">
    <property type="entry name" value="Ribosomal_uS5_bac-type"/>
</dbReference>
<dbReference type="InterPro" id="IPR005324">
    <property type="entry name" value="Ribosomal_uS5_C"/>
</dbReference>
<dbReference type="InterPro" id="IPR013810">
    <property type="entry name" value="Ribosomal_uS5_N"/>
</dbReference>
<dbReference type="InterPro" id="IPR018192">
    <property type="entry name" value="Ribosomal_uS5_N_CS"/>
</dbReference>
<dbReference type="InterPro" id="IPR014721">
    <property type="entry name" value="Ribsml_uS5_D2-typ_fold_subgr"/>
</dbReference>
<dbReference type="NCBIfam" id="TIGR01021">
    <property type="entry name" value="rpsE_bact"/>
    <property type="match status" value="1"/>
</dbReference>
<dbReference type="PANTHER" id="PTHR48277">
    <property type="entry name" value="MITOCHONDRIAL RIBOSOMAL PROTEIN S5"/>
    <property type="match status" value="1"/>
</dbReference>
<dbReference type="PANTHER" id="PTHR48277:SF1">
    <property type="entry name" value="MITOCHONDRIAL RIBOSOMAL PROTEIN S5"/>
    <property type="match status" value="1"/>
</dbReference>
<dbReference type="Pfam" id="PF00333">
    <property type="entry name" value="Ribosomal_S5"/>
    <property type="match status" value="1"/>
</dbReference>
<dbReference type="Pfam" id="PF03719">
    <property type="entry name" value="Ribosomal_S5_C"/>
    <property type="match status" value="1"/>
</dbReference>
<dbReference type="SUPFAM" id="SSF54768">
    <property type="entry name" value="dsRNA-binding domain-like"/>
    <property type="match status" value="1"/>
</dbReference>
<dbReference type="SUPFAM" id="SSF54211">
    <property type="entry name" value="Ribosomal protein S5 domain 2-like"/>
    <property type="match status" value="1"/>
</dbReference>
<dbReference type="PROSITE" id="PS00585">
    <property type="entry name" value="RIBOSOMAL_S5"/>
    <property type="match status" value="1"/>
</dbReference>
<dbReference type="PROSITE" id="PS50881">
    <property type="entry name" value="S5_DSRBD"/>
    <property type="match status" value="1"/>
</dbReference>
<proteinExistence type="inferred from homology"/>
<sequence>MTQPNTQTTPNDVPAAAEGQQEQQQQQRRGGGRERRGGGRRGDRRGQERDSEWQERVVQIRRVSKTVKGGKKMSFRAIVVVGNERGQVGVGVGKAGDVIGAVRKGVADGKKHLVKVPLTRHNSIPTLSNGRDGAANVLIRPAAPGTGVIAGGSIRTVLELAGIKNVLAKRLGSKTPLNNARAAMVALASLRTHKETAKERGISLEQIYS</sequence>
<comment type="function">
    <text evidence="1">With S4 and S12 plays an important role in translational accuracy.</text>
</comment>
<comment type="function">
    <text evidence="1">Located at the back of the 30S subunit body where it stabilizes the conformation of the head with respect to the body.</text>
</comment>
<comment type="subunit">
    <text evidence="1">Part of the 30S ribosomal subunit. Contacts proteins S4 and S8.</text>
</comment>
<comment type="domain">
    <text>The N-terminal domain interacts with the head of the 30S subunit; the C-terminal domain interacts with the body and contacts protein S4. The interaction surface between S4 and S5 is involved in control of translational fidelity.</text>
</comment>
<comment type="similarity">
    <text evidence="1">Belongs to the universal ribosomal protein uS5 family.</text>
</comment>
<accession>Q7V529</accession>